<organism>
    <name type="scientific">Rattus norvegicus</name>
    <name type="common">Rat</name>
    <dbReference type="NCBI Taxonomy" id="10116"/>
    <lineage>
        <taxon>Eukaryota</taxon>
        <taxon>Metazoa</taxon>
        <taxon>Chordata</taxon>
        <taxon>Craniata</taxon>
        <taxon>Vertebrata</taxon>
        <taxon>Euteleostomi</taxon>
        <taxon>Mammalia</taxon>
        <taxon>Eutheria</taxon>
        <taxon>Euarchontoglires</taxon>
        <taxon>Glires</taxon>
        <taxon>Rodentia</taxon>
        <taxon>Myomorpha</taxon>
        <taxon>Muroidea</taxon>
        <taxon>Muridae</taxon>
        <taxon>Murinae</taxon>
        <taxon>Rattus</taxon>
    </lineage>
</organism>
<keyword id="KW-0007">Acetylation</keyword>
<keyword id="KW-0963">Cytoplasm</keyword>
<keyword id="KW-0968">Cytoplasmic vesicle</keyword>
<keyword id="KW-0931">ER-Golgi transport</keyword>
<keyword id="KW-0333">Golgi apparatus</keyword>
<keyword id="KW-0472">Membrane</keyword>
<keyword id="KW-0597">Phosphoprotein</keyword>
<keyword id="KW-0653">Protein transport</keyword>
<keyword id="KW-1185">Reference proteome</keyword>
<keyword id="KW-0813">Transport</keyword>
<comment type="function">
    <text evidence="1">The coatomer is a cytosolic protein complex that binds to dilysine motifs and reversibly associates with Golgi non-clathrin-coated vesicles, which further mediate biosynthetic protein transport from the ER, via the Golgi up to the trans Golgi network. Coatomer complex is required for budding from Golgi membranes, and is essential for the retrograde Golgi-to-ER transport of dilysine-tagged proteins. In mammals, the coatomer can only be recruited by membranes associated to ADP-ribosylation factors (ARFs), which are small GTP-binding proteins; the complex also influences the Golgi structural integrity, as well as the processing, activity, and endocytic recycling of LDL receptors (By similarity).</text>
</comment>
<comment type="subunit">
    <text evidence="1">Oligomeric complex that consists of at least the alpha, beta, beta', gamma, delta, epsilon and zeta subunits.</text>
</comment>
<comment type="subcellular location">
    <subcellularLocation>
        <location evidence="1">Cytoplasm</location>
    </subcellularLocation>
    <subcellularLocation>
        <location evidence="1">Golgi apparatus membrane</location>
        <topology evidence="1">Peripheral membrane protein</topology>
        <orientation evidence="1">Cytoplasmic side</orientation>
    </subcellularLocation>
    <subcellularLocation>
        <location evidence="1">Cytoplasmic vesicle</location>
        <location evidence="1">COPI-coated vesicle membrane</location>
        <topology evidence="1">Peripheral membrane protein</topology>
        <orientation evidence="1">Cytoplasmic side</orientation>
    </subcellularLocation>
    <text evidence="1">The coatomer is cytoplasmic or polymerized on the cytoplasmic side of the Golgi, as well as on the vesicles/buds originating from it.</text>
</comment>
<comment type="similarity">
    <text evidence="6">Belongs to the adaptor complexes medium subunit family. Delta-COP subfamily.</text>
</comment>
<proteinExistence type="evidence at transcript level"/>
<name>COPD_RAT</name>
<sequence>MVLLAAAVCTKAGKAIVSRQFVEMTRTRIEGLLAAFPKLMNTGKQHTFVETESVRYVYQPMEKLYMVLITTKNSNILEDLETLRLFSRVIPEYCRALEENEISEHCFDLIFAFDEIVALGYRENVNLAQIRTFTEMDSHEEKVFRAVRETQEREAKAEMRRKAKELQQARRDAERQGKKAPGFGGFGSSAVSGGSTAAMITETIIETDKPKVAPAPARPSGPSKALKLGAKGKEVDNFVDKLKSEGETIMSSNMGKRTSEAAKVHAPPINMESVHMKIEEKITLTCGRDGGLQNMELHGMIMLRISDDKFGRIRLHVENEDKKGVQLQTHPNVDKKLFTAESLIGLKNPEKSFPVNSDVGVLKWRLQTTEESFIPLTINCWPSESGNGCDVNIEYELQEDNLELNDVVITIPLPSGVGAPVIGEIDGEYRHDSRRNTLEWCLPVIDAKNKSGSLEFSIPGQPNDFFPVQVSFISKKNYCNIQVTKVTQVDGNSPVRFSTETTFLVDKYEIL</sequence>
<feature type="chain" id="PRO_0000193844" description="Coatomer subunit delta">
    <location>
        <begin position="1"/>
        <end position="511"/>
    </location>
</feature>
<feature type="domain" description="MHD" evidence="4">
    <location>
        <begin position="271"/>
        <end position="511"/>
    </location>
</feature>
<feature type="region of interest" description="Disordered" evidence="5">
    <location>
        <begin position="168"/>
        <end position="188"/>
    </location>
</feature>
<feature type="compositionally biased region" description="Basic and acidic residues" evidence="5">
    <location>
        <begin position="168"/>
        <end position="177"/>
    </location>
</feature>
<feature type="modified residue" description="Phosphoserine" evidence="2">
    <location>
        <position position="223"/>
    </location>
</feature>
<feature type="modified residue" description="N6-acetyllysine" evidence="2">
    <location>
        <position position="233"/>
    </location>
</feature>
<feature type="modified residue" description="N6-acetyllysine" evidence="3">
    <location>
        <position position="241"/>
    </location>
</feature>
<feature type="modified residue" description="Phosphoserine" evidence="2">
    <location>
        <position position="244"/>
    </location>
</feature>
<feature type="modified residue" description="N6-acetyllysine" evidence="2">
    <location>
        <position position="309"/>
    </location>
</feature>
<feature type="modified residue" description="N6-acetyllysine" evidence="3">
    <location>
        <position position="351"/>
    </location>
</feature>
<feature type="modified residue" description="Phosphoserine" evidence="2">
    <location>
        <position position="493"/>
    </location>
</feature>
<accession>Q66H80</accession>
<dbReference type="EMBL" id="BC081979">
    <property type="protein sequence ID" value="AAH81979.1"/>
    <property type="molecule type" value="mRNA"/>
</dbReference>
<dbReference type="RefSeq" id="NP_001007663.1">
    <property type="nucleotide sequence ID" value="NM_001007662.1"/>
</dbReference>
<dbReference type="SMR" id="Q66H80"/>
<dbReference type="BioGRID" id="256663">
    <property type="interactions" value="2"/>
</dbReference>
<dbReference type="FunCoup" id="Q66H80">
    <property type="interactions" value="4236"/>
</dbReference>
<dbReference type="IntAct" id="Q66H80">
    <property type="interactions" value="2"/>
</dbReference>
<dbReference type="STRING" id="10116.ENSRNOP00000072654"/>
<dbReference type="iPTMnet" id="Q66H80"/>
<dbReference type="PhosphoSitePlus" id="Q66H80"/>
<dbReference type="jPOST" id="Q66H80"/>
<dbReference type="PaxDb" id="10116-ENSRNOP00000018598"/>
<dbReference type="Ensembl" id="ENSRNOT00000102084.1">
    <property type="protein sequence ID" value="ENSRNOP00000076974.1"/>
    <property type="gene ID" value="ENSRNOG00000061108.2"/>
</dbReference>
<dbReference type="GeneID" id="300674"/>
<dbReference type="KEGG" id="rno:300674"/>
<dbReference type="UCSC" id="RGD:1359110">
    <property type="organism name" value="rat"/>
</dbReference>
<dbReference type="AGR" id="RGD:1359110"/>
<dbReference type="CTD" id="372"/>
<dbReference type="RGD" id="1359110">
    <property type="gene designation" value="Arcn1"/>
</dbReference>
<dbReference type="eggNOG" id="KOG2635">
    <property type="taxonomic scope" value="Eukaryota"/>
</dbReference>
<dbReference type="GeneTree" id="ENSGT00390000017207"/>
<dbReference type="HOGENOM" id="CLU_019988_3_0_1"/>
<dbReference type="InParanoid" id="Q66H80"/>
<dbReference type="OMA" id="VQFRTHP"/>
<dbReference type="OrthoDB" id="10266042at2759"/>
<dbReference type="PhylomeDB" id="Q66H80"/>
<dbReference type="TreeFam" id="TF105760"/>
<dbReference type="Reactome" id="R-RNO-6807878">
    <property type="pathway name" value="COPI-mediated anterograde transport"/>
</dbReference>
<dbReference type="Reactome" id="R-RNO-6811434">
    <property type="pathway name" value="COPI-dependent Golgi-to-ER retrograde traffic"/>
</dbReference>
<dbReference type="PRO" id="PR:Q66H80"/>
<dbReference type="Proteomes" id="UP000002494">
    <property type="component" value="Chromosome 8"/>
</dbReference>
<dbReference type="Bgee" id="ENSRNOG00000061108">
    <property type="expression patterns" value="Expressed in jejunum and 19 other cell types or tissues"/>
</dbReference>
<dbReference type="GO" id="GO:0030126">
    <property type="term" value="C:COPI vesicle coat"/>
    <property type="evidence" value="ECO:0000318"/>
    <property type="project" value="GO_Central"/>
</dbReference>
<dbReference type="GO" id="GO:0030137">
    <property type="term" value="C:COPI-coated vesicle"/>
    <property type="evidence" value="ECO:0000266"/>
    <property type="project" value="RGD"/>
</dbReference>
<dbReference type="GO" id="GO:0005783">
    <property type="term" value="C:endoplasmic reticulum"/>
    <property type="evidence" value="ECO:0000266"/>
    <property type="project" value="RGD"/>
</dbReference>
<dbReference type="GO" id="GO:0005794">
    <property type="term" value="C:Golgi apparatus"/>
    <property type="evidence" value="ECO:0000266"/>
    <property type="project" value="RGD"/>
</dbReference>
<dbReference type="GO" id="GO:0000139">
    <property type="term" value="C:Golgi membrane"/>
    <property type="evidence" value="ECO:0007669"/>
    <property type="project" value="UniProtKB-SubCell"/>
</dbReference>
<dbReference type="GO" id="GO:0008344">
    <property type="term" value="P:adult locomotory behavior"/>
    <property type="evidence" value="ECO:0000266"/>
    <property type="project" value="RGD"/>
</dbReference>
<dbReference type="GO" id="GO:0021691">
    <property type="term" value="P:cerebellar Purkinje cell layer maturation"/>
    <property type="evidence" value="ECO:0000266"/>
    <property type="project" value="RGD"/>
</dbReference>
<dbReference type="GO" id="GO:0006888">
    <property type="term" value="P:endoplasmic reticulum to Golgi vesicle-mediated transport"/>
    <property type="evidence" value="ECO:0000318"/>
    <property type="project" value="GO_Central"/>
</dbReference>
<dbReference type="GO" id="GO:0051649">
    <property type="term" value="P:establishment of localization in cell"/>
    <property type="evidence" value="ECO:0000266"/>
    <property type="project" value="RGD"/>
</dbReference>
<dbReference type="GO" id="GO:0051645">
    <property type="term" value="P:Golgi localization"/>
    <property type="evidence" value="ECO:0000318"/>
    <property type="project" value="GO_Central"/>
</dbReference>
<dbReference type="GO" id="GO:0048193">
    <property type="term" value="P:Golgi vesicle transport"/>
    <property type="evidence" value="ECO:0000266"/>
    <property type="project" value="RGD"/>
</dbReference>
<dbReference type="GO" id="GO:0043473">
    <property type="term" value="P:pigmentation"/>
    <property type="evidence" value="ECO:0000266"/>
    <property type="project" value="RGD"/>
</dbReference>
<dbReference type="GO" id="GO:0015031">
    <property type="term" value="P:protein transport"/>
    <property type="evidence" value="ECO:0007669"/>
    <property type="project" value="UniProtKB-KW"/>
</dbReference>
<dbReference type="GO" id="GO:0006890">
    <property type="term" value="P:retrograde vesicle-mediated transport, Golgi to endoplasmic reticulum"/>
    <property type="evidence" value="ECO:0000318"/>
    <property type="project" value="GO_Central"/>
</dbReference>
<dbReference type="CDD" id="cd09254">
    <property type="entry name" value="AP_delta-COPI_MHD"/>
    <property type="match status" value="1"/>
</dbReference>
<dbReference type="CDD" id="cd14830">
    <property type="entry name" value="Delta_COP_N"/>
    <property type="match status" value="1"/>
</dbReference>
<dbReference type="FunFam" id="2.60.40.1170:FF:000007">
    <property type="entry name" value="Coatomer subunit delta"/>
    <property type="match status" value="1"/>
</dbReference>
<dbReference type="FunFam" id="2.60.40.1170:FF:000011">
    <property type="entry name" value="Coatomer subunit delta"/>
    <property type="match status" value="1"/>
</dbReference>
<dbReference type="FunFam" id="3.30.450.60:FF:000003">
    <property type="entry name" value="Coatomer subunit delta"/>
    <property type="match status" value="1"/>
</dbReference>
<dbReference type="Gene3D" id="3.30.450.60">
    <property type="match status" value="1"/>
</dbReference>
<dbReference type="Gene3D" id="2.60.40.1170">
    <property type="entry name" value="Mu homology domain, subdomain B"/>
    <property type="match status" value="2"/>
</dbReference>
<dbReference type="InterPro" id="IPR036168">
    <property type="entry name" value="AP2_Mu_C_sf"/>
</dbReference>
<dbReference type="InterPro" id="IPR022775">
    <property type="entry name" value="AP_mu_sigma_su"/>
</dbReference>
<dbReference type="InterPro" id="IPR027059">
    <property type="entry name" value="Coatomer_dsu"/>
</dbReference>
<dbReference type="InterPro" id="IPR011012">
    <property type="entry name" value="Longin-like_dom_sf"/>
</dbReference>
<dbReference type="InterPro" id="IPR028565">
    <property type="entry name" value="MHD"/>
</dbReference>
<dbReference type="PANTHER" id="PTHR10121">
    <property type="entry name" value="COATOMER SUBUNIT DELTA"/>
    <property type="match status" value="1"/>
</dbReference>
<dbReference type="PANTHER" id="PTHR10121:SF0">
    <property type="entry name" value="COATOMER SUBUNIT DELTA"/>
    <property type="match status" value="1"/>
</dbReference>
<dbReference type="Pfam" id="PF00928">
    <property type="entry name" value="Adap_comp_sub"/>
    <property type="match status" value="1"/>
</dbReference>
<dbReference type="Pfam" id="PF01217">
    <property type="entry name" value="Clat_adaptor_s"/>
    <property type="match status" value="1"/>
</dbReference>
<dbReference type="SUPFAM" id="SSF49447">
    <property type="entry name" value="Second domain of Mu2 adaptin subunit (ap50) of ap2 adaptor"/>
    <property type="match status" value="1"/>
</dbReference>
<dbReference type="SUPFAM" id="SSF64356">
    <property type="entry name" value="SNARE-like"/>
    <property type="match status" value="1"/>
</dbReference>
<dbReference type="PROSITE" id="PS51072">
    <property type="entry name" value="MHD"/>
    <property type="match status" value="1"/>
</dbReference>
<gene>
    <name type="primary">Arcn1</name>
    <name type="synonym">Copd</name>
</gene>
<reference key="1">
    <citation type="journal article" date="2004" name="Genome Res.">
        <title>The status, quality, and expansion of the NIH full-length cDNA project: the Mammalian Gene Collection (MGC).</title>
        <authorList>
            <consortium name="The MGC Project Team"/>
        </authorList>
    </citation>
    <scope>NUCLEOTIDE SEQUENCE [LARGE SCALE MRNA]</scope>
    <source>
        <tissue>Kidney</tissue>
    </source>
</reference>
<protein>
    <recommendedName>
        <fullName>Coatomer subunit delta</fullName>
    </recommendedName>
    <alternativeName>
        <fullName>Archain</fullName>
    </alternativeName>
    <alternativeName>
        <fullName>Delta-coat protein</fullName>
        <shortName>Delta-COP</shortName>
    </alternativeName>
</protein>
<evidence type="ECO:0000250" key="1"/>
<evidence type="ECO:0000250" key="2">
    <source>
        <dbReference type="UniProtKB" id="P48444"/>
    </source>
</evidence>
<evidence type="ECO:0000250" key="3">
    <source>
        <dbReference type="UniProtKB" id="Q5XJY5"/>
    </source>
</evidence>
<evidence type="ECO:0000255" key="4">
    <source>
        <dbReference type="PROSITE-ProRule" id="PRU00404"/>
    </source>
</evidence>
<evidence type="ECO:0000256" key="5">
    <source>
        <dbReference type="SAM" id="MobiDB-lite"/>
    </source>
</evidence>
<evidence type="ECO:0000305" key="6"/>